<proteinExistence type="inferred from homology"/>
<name>TXLA_SYNY3</name>
<accession>P73920</accession>
<protein>
    <recommendedName>
        <fullName>Thiol:disulfide interchange protein TxlA homolog</fullName>
    </recommendedName>
</protein>
<organism>
    <name type="scientific">Synechocystis sp. (strain ATCC 27184 / PCC 6803 / Kazusa)</name>
    <dbReference type="NCBI Taxonomy" id="1111708"/>
    <lineage>
        <taxon>Bacteria</taxon>
        <taxon>Bacillati</taxon>
        <taxon>Cyanobacteriota</taxon>
        <taxon>Cyanophyceae</taxon>
        <taxon>Synechococcales</taxon>
        <taxon>Merismopediaceae</taxon>
        <taxon>Synechocystis</taxon>
    </lineage>
</organism>
<keyword id="KW-1003">Cell membrane</keyword>
<keyword id="KW-1015">Disulfide bond</keyword>
<keyword id="KW-0472">Membrane</keyword>
<keyword id="KW-0676">Redox-active center</keyword>
<keyword id="KW-1185">Reference proteome</keyword>
<keyword id="KW-0812">Transmembrane</keyword>
<keyword id="KW-1133">Transmembrane helix</keyword>
<sequence length="180" mass="19517">MTPAKIRNALLAVVAIALSAAVYLGFQTQTQGISLEAQAQRAIPLATALDNGRPTLVEFYADWCTSCQAMAPDLAELKKNYGGSVNFAMLNVDNNKWLPEVLRYRVDGIPHFVYLDDTGTAIAESIGEQPLRVLEQNITALVAHEPIPYANVTGQTSVVENRTIEADPTSPRSHGNPRPS</sequence>
<feature type="chain" id="PRO_0000120179" description="Thiol:disulfide interchange protein TxlA homolog">
    <location>
        <begin position="1"/>
        <end position="180"/>
    </location>
</feature>
<feature type="transmembrane region" description="Helical" evidence="2">
    <location>
        <begin position="10"/>
        <end position="26"/>
    </location>
</feature>
<feature type="domain" description="Thioredoxin" evidence="3">
    <location>
        <begin position="34"/>
        <end position="143"/>
    </location>
</feature>
<feature type="disulfide bond" description="Redox-active" evidence="3">
    <location>
        <begin position="64"/>
        <end position="67"/>
    </location>
</feature>
<gene>
    <name type="primary">txlA</name>
    <name type="ordered locus">sll1980</name>
</gene>
<reference key="1">
    <citation type="journal article" date="1996" name="DNA Res.">
        <title>Sequence analysis of the genome of the unicellular cyanobacterium Synechocystis sp. strain PCC6803. II. Sequence determination of the entire genome and assignment of potential protein-coding regions.</title>
        <authorList>
            <person name="Kaneko T."/>
            <person name="Sato S."/>
            <person name="Kotani H."/>
            <person name="Tanaka A."/>
            <person name="Asamizu E."/>
            <person name="Nakamura Y."/>
            <person name="Miyajima N."/>
            <person name="Hirosawa M."/>
            <person name="Sugiura M."/>
            <person name="Sasamoto S."/>
            <person name="Kimura T."/>
            <person name="Hosouchi T."/>
            <person name="Matsuno A."/>
            <person name="Muraki A."/>
            <person name="Nakazaki N."/>
            <person name="Naruo K."/>
            <person name="Okumura S."/>
            <person name="Shimpo S."/>
            <person name="Takeuchi C."/>
            <person name="Wada T."/>
            <person name="Watanabe A."/>
            <person name="Yamada M."/>
            <person name="Yasuda M."/>
            <person name="Tabata S."/>
        </authorList>
    </citation>
    <scope>NUCLEOTIDE SEQUENCE [LARGE SCALE GENOMIC DNA]</scope>
    <source>
        <strain>ATCC 27184 / PCC 6803 / Kazusa</strain>
    </source>
</reference>
<comment type="function">
    <text evidence="1">Required for disulfide bond formation in some proteins. Acts by transferring its disulfide bond to other proteins and is reduced in the process (By similarity).</text>
</comment>
<comment type="subcellular location">
    <subcellularLocation>
        <location evidence="4">Cell membrane</location>
        <topology evidence="4">Single-pass membrane protein</topology>
    </subcellularLocation>
</comment>
<comment type="similarity">
    <text evidence="4">Belongs to the thioredoxin family.</text>
</comment>
<evidence type="ECO:0000250" key="1"/>
<evidence type="ECO:0000255" key="2"/>
<evidence type="ECO:0000255" key="3">
    <source>
        <dbReference type="PROSITE-ProRule" id="PRU00691"/>
    </source>
</evidence>
<evidence type="ECO:0000305" key="4"/>
<dbReference type="EMBL" id="BA000022">
    <property type="protein sequence ID" value="BAA17986.1"/>
    <property type="molecule type" value="Genomic_DNA"/>
</dbReference>
<dbReference type="PIR" id="S75124">
    <property type="entry name" value="S75124"/>
</dbReference>
<dbReference type="SMR" id="P73920"/>
<dbReference type="STRING" id="1148.gene:10498856"/>
<dbReference type="PaxDb" id="1148-1653069"/>
<dbReference type="EnsemblBacteria" id="BAA17986">
    <property type="protein sequence ID" value="BAA17986"/>
    <property type="gene ID" value="BAA17986"/>
</dbReference>
<dbReference type="KEGG" id="syn:sll1980"/>
<dbReference type="eggNOG" id="COG0526">
    <property type="taxonomic scope" value="Bacteria"/>
</dbReference>
<dbReference type="InParanoid" id="P73920"/>
<dbReference type="PhylomeDB" id="P73920"/>
<dbReference type="Proteomes" id="UP000001425">
    <property type="component" value="Chromosome"/>
</dbReference>
<dbReference type="GO" id="GO:0005886">
    <property type="term" value="C:plasma membrane"/>
    <property type="evidence" value="ECO:0007669"/>
    <property type="project" value="UniProtKB-SubCell"/>
</dbReference>
<dbReference type="GO" id="GO:0016671">
    <property type="term" value="F:oxidoreductase activity, acting on a sulfur group of donors, disulfide as acceptor"/>
    <property type="evidence" value="ECO:0000318"/>
    <property type="project" value="GO_Central"/>
</dbReference>
<dbReference type="CDD" id="cd02950">
    <property type="entry name" value="TxlA"/>
    <property type="match status" value="1"/>
</dbReference>
<dbReference type="FunFam" id="3.40.30.10:FF:000423">
    <property type="entry name" value="Thiol:disulfide interchange protein"/>
    <property type="match status" value="1"/>
</dbReference>
<dbReference type="Gene3D" id="3.40.30.10">
    <property type="entry name" value="Glutaredoxin"/>
    <property type="match status" value="1"/>
</dbReference>
<dbReference type="InterPro" id="IPR036249">
    <property type="entry name" value="Thioredoxin-like_sf"/>
</dbReference>
<dbReference type="InterPro" id="IPR017937">
    <property type="entry name" value="Thioredoxin_CS"/>
</dbReference>
<dbReference type="InterPro" id="IPR013766">
    <property type="entry name" value="Thioredoxin_domain"/>
</dbReference>
<dbReference type="InterPro" id="IPR044241">
    <property type="entry name" value="TxlA/HCF164"/>
</dbReference>
<dbReference type="PANTHER" id="PTHR47353">
    <property type="entry name" value="THIOREDOXIN-LIKE PROTEIN HCF164, CHLOROPLASTIC"/>
    <property type="match status" value="1"/>
</dbReference>
<dbReference type="PANTHER" id="PTHR47353:SF1">
    <property type="entry name" value="THIOREDOXIN-LIKE PROTEIN HCF164, CHLOROPLASTIC"/>
    <property type="match status" value="1"/>
</dbReference>
<dbReference type="Pfam" id="PF00085">
    <property type="entry name" value="Thioredoxin"/>
    <property type="match status" value="1"/>
</dbReference>
<dbReference type="SUPFAM" id="SSF52833">
    <property type="entry name" value="Thioredoxin-like"/>
    <property type="match status" value="1"/>
</dbReference>
<dbReference type="PROSITE" id="PS00194">
    <property type="entry name" value="THIOREDOXIN_1"/>
    <property type="match status" value="1"/>
</dbReference>
<dbReference type="PROSITE" id="PS51352">
    <property type="entry name" value="THIOREDOXIN_2"/>
    <property type="match status" value="1"/>
</dbReference>